<gene>
    <name type="primary">HOX13</name>
    <name type="ORF">OsI_10318</name>
</gene>
<dbReference type="EMBL" id="CM000128">
    <property type="protein sequence ID" value="EEC74656.1"/>
    <property type="molecule type" value="Genomic_DNA"/>
</dbReference>
<dbReference type="EMBL" id="EF555534">
    <property type="protein sequence ID" value="ABQ57275.1"/>
    <property type="molecule type" value="mRNA"/>
</dbReference>
<dbReference type="SMR" id="A2XDD6"/>
<dbReference type="STRING" id="39946.A2XDD6"/>
<dbReference type="EnsemblPlants" id="BGIOSGA012017-TA">
    <property type="protein sequence ID" value="BGIOSGA012017-PA"/>
    <property type="gene ID" value="BGIOSGA012017"/>
</dbReference>
<dbReference type="Gramene" id="BGIOSGA012017-TA">
    <property type="protein sequence ID" value="BGIOSGA012017-PA"/>
    <property type="gene ID" value="BGIOSGA012017"/>
</dbReference>
<dbReference type="HOGENOM" id="CLU_060842_1_1_1"/>
<dbReference type="OMA" id="TMEQQDE"/>
<dbReference type="Proteomes" id="UP000007015">
    <property type="component" value="Chromosome 3"/>
</dbReference>
<dbReference type="GO" id="GO:0005634">
    <property type="term" value="C:nucleus"/>
    <property type="evidence" value="ECO:0007669"/>
    <property type="project" value="UniProtKB-SubCell"/>
</dbReference>
<dbReference type="GO" id="GO:0000981">
    <property type="term" value="F:DNA-binding transcription factor activity, RNA polymerase II-specific"/>
    <property type="evidence" value="ECO:0007669"/>
    <property type="project" value="InterPro"/>
</dbReference>
<dbReference type="GO" id="GO:0043565">
    <property type="term" value="F:sequence-specific DNA binding"/>
    <property type="evidence" value="ECO:0007669"/>
    <property type="project" value="InterPro"/>
</dbReference>
<dbReference type="GO" id="GO:0045893">
    <property type="term" value="P:positive regulation of DNA-templated transcription"/>
    <property type="evidence" value="ECO:0007669"/>
    <property type="project" value="TreeGrafter"/>
</dbReference>
<dbReference type="CDD" id="cd00086">
    <property type="entry name" value="homeodomain"/>
    <property type="match status" value="1"/>
</dbReference>
<dbReference type="FunFam" id="1.10.10.60:FF:000242">
    <property type="entry name" value="Homeobox-leucine zipper protein HOX13"/>
    <property type="match status" value="1"/>
</dbReference>
<dbReference type="Gene3D" id="1.10.10.60">
    <property type="entry name" value="Homeodomain-like"/>
    <property type="match status" value="1"/>
</dbReference>
<dbReference type="InterPro" id="IPR001356">
    <property type="entry name" value="HD"/>
</dbReference>
<dbReference type="InterPro" id="IPR045224">
    <property type="entry name" value="HDZip_class_I_plant"/>
</dbReference>
<dbReference type="InterPro" id="IPR017970">
    <property type="entry name" value="Homeobox_CS"/>
</dbReference>
<dbReference type="InterPro" id="IPR009057">
    <property type="entry name" value="Homeodomain-like_sf"/>
</dbReference>
<dbReference type="InterPro" id="IPR000047">
    <property type="entry name" value="HTH_motif"/>
</dbReference>
<dbReference type="InterPro" id="IPR003106">
    <property type="entry name" value="Leu_zip_homeo"/>
</dbReference>
<dbReference type="PANTHER" id="PTHR24326">
    <property type="entry name" value="HOMEOBOX-LEUCINE ZIPPER PROTEIN"/>
    <property type="match status" value="1"/>
</dbReference>
<dbReference type="PANTHER" id="PTHR24326:SF300">
    <property type="entry name" value="HOMEOBOX-LEUCINE ZIPPER PROTEIN HOX13"/>
    <property type="match status" value="1"/>
</dbReference>
<dbReference type="Pfam" id="PF02183">
    <property type="entry name" value="HALZ"/>
    <property type="match status" value="1"/>
</dbReference>
<dbReference type="Pfam" id="PF00046">
    <property type="entry name" value="Homeodomain"/>
    <property type="match status" value="1"/>
</dbReference>
<dbReference type="PRINTS" id="PR00031">
    <property type="entry name" value="HTHREPRESSR"/>
</dbReference>
<dbReference type="SMART" id="SM00389">
    <property type="entry name" value="HOX"/>
    <property type="match status" value="1"/>
</dbReference>
<dbReference type="SUPFAM" id="SSF46689">
    <property type="entry name" value="Homeodomain-like"/>
    <property type="match status" value="1"/>
</dbReference>
<dbReference type="PROSITE" id="PS00027">
    <property type="entry name" value="HOMEOBOX_1"/>
    <property type="match status" value="1"/>
</dbReference>
<dbReference type="PROSITE" id="PS50071">
    <property type="entry name" value="HOMEOBOX_2"/>
    <property type="match status" value="1"/>
</dbReference>
<feature type="chain" id="PRO_0000331698" description="Homeobox-leucine zipper protein HOX13">
    <location>
        <begin position="1"/>
        <end position="312"/>
    </location>
</feature>
<feature type="DNA-binding region" description="Homeobox" evidence="2">
    <location>
        <begin position="70"/>
        <end position="129"/>
    </location>
</feature>
<feature type="region of interest" description="Disordered" evidence="3">
    <location>
        <begin position="1"/>
        <end position="74"/>
    </location>
</feature>
<feature type="region of interest" description="Leucine-zipper">
    <location>
        <begin position="127"/>
        <end position="172"/>
    </location>
</feature>
<feature type="compositionally biased region" description="Acidic residues" evidence="3">
    <location>
        <begin position="35"/>
        <end position="54"/>
    </location>
</feature>
<keyword id="KW-0238">DNA-binding</keyword>
<keyword id="KW-0371">Homeobox</keyword>
<keyword id="KW-0539">Nucleus</keyword>
<keyword id="KW-1185">Reference proteome</keyword>
<keyword id="KW-0804">Transcription</keyword>
<keyword id="KW-0805">Transcription regulation</keyword>
<sequence>MKRPTSSSRKSKKQGEDLAFSEEGSLPAVTMEQKDEAEMEEVDDEEEEEVDEDMAGGHAAQSPSPSCGLGEKKRRLALEQVRALERSFDTDNKLDPDRKARIARDLGLQPRQVAVWFQNRRARWKTKQLERDFAALRAQHNDALRADCDALRRDKDALAAEIRELREKLPTKPADTAASVKVEAGNDAAAGAAAATVCKDGSSDDSDSSVVFNDEASPYSGAAFIGFGPSFLVDDASAATVGCSSSLPALESKWHGPYSDDSCKGGVYGFTEEWLAACSGEMAGNDAAGFFSDEHASNLNFGWCASGNEGWE</sequence>
<name>HOX13_ORYSI</name>
<accession>A2XDD6</accession>
<accession>A5JPU9</accession>
<accession>B8APR0</accession>
<proteinExistence type="evidence at transcript level"/>
<protein>
    <recommendedName>
        <fullName>Homeobox-leucine zipper protein HOX13</fullName>
    </recommendedName>
    <alternativeName>
        <fullName>HD-ZIP protein HOX13</fullName>
    </alternativeName>
    <alternativeName>
        <fullName>Homeodomain transcription factor HOX13</fullName>
    </alternativeName>
    <alternativeName>
        <fullName>OsHox13</fullName>
    </alternativeName>
</protein>
<reference key="1">
    <citation type="journal article" date="2005" name="PLoS Biol.">
        <title>The genomes of Oryza sativa: a history of duplications.</title>
        <authorList>
            <person name="Yu J."/>
            <person name="Wang J."/>
            <person name="Lin W."/>
            <person name="Li S."/>
            <person name="Li H."/>
            <person name="Zhou J."/>
            <person name="Ni P."/>
            <person name="Dong W."/>
            <person name="Hu S."/>
            <person name="Zeng C."/>
            <person name="Zhang J."/>
            <person name="Zhang Y."/>
            <person name="Li R."/>
            <person name="Xu Z."/>
            <person name="Li S."/>
            <person name="Li X."/>
            <person name="Zheng H."/>
            <person name="Cong L."/>
            <person name="Lin L."/>
            <person name="Yin J."/>
            <person name="Geng J."/>
            <person name="Li G."/>
            <person name="Shi J."/>
            <person name="Liu J."/>
            <person name="Lv H."/>
            <person name="Li J."/>
            <person name="Wang J."/>
            <person name="Deng Y."/>
            <person name="Ran L."/>
            <person name="Shi X."/>
            <person name="Wang X."/>
            <person name="Wu Q."/>
            <person name="Li C."/>
            <person name="Ren X."/>
            <person name="Wang J."/>
            <person name="Wang X."/>
            <person name="Li D."/>
            <person name="Liu D."/>
            <person name="Zhang X."/>
            <person name="Ji Z."/>
            <person name="Zhao W."/>
            <person name="Sun Y."/>
            <person name="Zhang Z."/>
            <person name="Bao J."/>
            <person name="Han Y."/>
            <person name="Dong L."/>
            <person name="Ji J."/>
            <person name="Chen P."/>
            <person name="Wu S."/>
            <person name="Liu J."/>
            <person name="Xiao Y."/>
            <person name="Bu D."/>
            <person name="Tan J."/>
            <person name="Yang L."/>
            <person name="Ye C."/>
            <person name="Zhang J."/>
            <person name="Xu J."/>
            <person name="Zhou Y."/>
            <person name="Yu Y."/>
            <person name="Zhang B."/>
            <person name="Zhuang S."/>
            <person name="Wei H."/>
            <person name="Liu B."/>
            <person name="Lei M."/>
            <person name="Yu H."/>
            <person name="Li Y."/>
            <person name="Xu H."/>
            <person name="Wei S."/>
            <person name="He X."/>
            <person name="Fang L."/>
            <person name="Zhang Z."/>
            <person name="Zhang Y."/>
            <person name="Huang X."/>
            <person name="Su Z."/>
            <person name="Tong W."/>
            <person name="Li J."/>
            <person name="Tong Z."/>
            <person name="Li S."/>
            <person name="Ye J."/>
            <person name="Wang L."/>
            <person name="Fang L."/>
            <person name="Lei T."/>
            <person name="Chen C.-S."/>
            <person name="Chen H.-C."/>
            <person name="Xu Z."/>
            <person name="Li H."/>
            <person name="Huang H."/>
            <person name="Zhang F."/>
            <person name="Xu H."/>
            <person name="Li N."/>
            <person name="Zhao C."/>
            <person name="Li S."/>
            <person name="Dong L."/>
            <person name="Huang Y."/>
            <person name="Li L."/>
            <person name="Xi Y."/>
            <person name="Qi Q."/>
            <person name="Li W."/>
            <person name="Zhang B."/>
            <person name="Hu W."/>
            <person name="Zhang Y."/>
            <person name="Tian X."/>
            <person name="Jiao Y."/>
            <person name="Liang X."/>
            <person name="Jin J."/>
            <person name="Gao L."/>
            <person name="Zheng W."/>
            <person name="Hao B."/>
            <person name="Liu S.-M."/>
            <person name="Wang W."/>
            <person name="Yuan L."/>
            <person name="Cao M."/>
            <person name="McDermott J."/>
            <person name="Samudrala R."/>
            <person name="Wang J."/>
            <person name="Wong G.K.-S."/>
            <person name="Yang H."/>
        </authorList>
    </citation>
    <scope>NUCLEOTIDE SEQUENCE [LARGE SCALE GENOMIC DNA]</scope>
    <source>
        <strain>cv. 93-11</strain>
    </source>
</reference>
<reference key="2">
    <citation type="journal article" date="2008" name="Plant Mol. Biol.">
        <title>A genome-wide survey of HD-Zip genes in rice and analysis of drought-responsive family members.</title>
        <authorList>
            <person name="Agalou A."/>
            <person name="Purwantomo S."/>
            <person name="Oevernaes E."/>
            <person name="Johannesson H."/>
            <person name="Zhu X."/>
            <person name="Estiati A."/>
            <person name="de Kam R.J."/>
            <person name="Engstroem P."/>
            <person name="Slamet-Loedin I.H."/>
            <person name="Zhu Z."/>
            <person name="Wang M."/>
            <person name="Xiong L."/>
            <person name="Meijer A.H."/>
            <person name="Ouwerkerk P.B.F."/>
        </authorList>
    </citation>
    <scope>NUCLEOTIDE SEQUENCE [MRNA] OF 1-80</scope>
    <scope>TISSUE SPECIFICITY</scope>
    <scope>GENE FAMILY</scope>
    <scope>NOMENCLATURE</scope>
    <source>
        <strain>cv. Minghui 86</strain>
    </source>
</reference>
<evidence type="ECO:0000250" key="1"/>
<evidence type="ECO:0000255" key="2">
    <source>
        <dbReference type="PROSITE-ProRule" id="PRU00108"/>
    </source>
</evidence>
<evidence type="ECO:0000256" key="3">
    <source>
        <dbReference type="SAM" id="MobiDB-lite"/>
    </source>
</evidence>
<evidence type="ECO:0000269" key="4">
    <source>
    </source>
</evidence>
<evidence type="ECO:0000305" key="5"/>
<organism>
    <name type="scientific">Oryza sativa subsp. indica</name>
    <name type="common">Rice</name>
    <dbReference type="NCBI Taxonomy" id="39946"/>
    <lineage>
        <taxon>Eukaryota</taxon>
        <taxon>Viridiplantae</taxon>
        <taxon>Streptophyta</taxon>
        <taxon>Embryophyta</taxon>
        <taxon>Tracheophyta</taxon>
        <taxon>Spermatophyta</taxon>
        <taxon>Magnoliopsida</taxon>
        <taxon>Liliopsida</taxon>
        <taxon>Poales</taxon>
        <taxon>Poaceae</taxon>
        <taxon>BOP clade</taxon>
        <taxon>Oryzoideae</taxon>
        <taxon>Oryzeae</taxon>
        <taxon>Oryzinae</taxon>
        <taxon>Oryza</taxon>
        <taxon>Oryza sativa</taxon>
    </lineage>
</organism>
<comment type="function">
    <text evidence="1">Probable transcription factor.</text>
</comment>
<comment type="subcellular location">
    <subcellularLocation>
        <location evidence="5">Nucleus</location>
    </subcellularLocation>
</comment>
<comment type="tissue specificity">
    <text evidence="4">Expressed in seedlings, roots, stems, leaf sheaths and blades and panicles.</text>
</comment>
<comment type="similarity">
    <text evidence="5">Belongs to the HD-ZIP homeobox family. Class I subfamily.</text>
</comment>